<evidence type="ECO:0000255" key="1">
    <source>
        <dbReference type="PROSITE-ProRule" id="PRU01182"/>
    </source>
</evidence>
<evidence type="ECO:0000256" key="2">
    <source>
        <dbReference type="SAM" id="MobiDB-lite"/>
    </source>
</evidence>
<evidence type="ECO:0000305" key="3"/>
<proteinExistence type="inferred from homology"/>
<dbReference type="EMBL" id="CP000521">
    <property type="protein sequence ID" value="ABO13323.2"/>
    <property type="molecule type" value="Genomic_DNA"/>
</dbReference>
<dbReference type="SMR" id="A3M8S9"/>
<dbReference type="KEGG" id="acb:A1S_2918"/>
<dbReference type="HOGENOM" id="CLU_073529_0_2_6"/>
<dbReference type="GO" id="GO:0046872">
    <property type="term" value="F:metal ion binding"/>
    <property type="evidence" value="ECO:0007669"/>
    <property type="project" value="UniProtKB-KW"/>
</dbReference>
<dbReference type="GO" id="GO:0008237">
    <property type="term" value="F:metallopeptidase activity"/>
    <property type="evidence" value="ECO:0007669"/>
    <property type="project" value="UniProtKB-KW"/>
</dbReference>
<dbReference type="GO" id="GO:0006508">
    <property type="term" value="P:proteolysis"/>
    <property type="evidence" value="ECO:0007669"/>
    <property type="project" value="UniProtKB-KW"/>
</dbReference>
<dbReference type="CDD" id="cd08071">
    <property type="entry name" value="MPN_DUF2466"/>
    <property type="match status" value="1"/>
</dbReference>
<dbReference type="Gene3D" id="1.10.150.20">
    <property type="entry name" value="5' to 3' exonuclease, C-terminal subdomain"/>
    <property type="match status" value="1"/>
</dbReference>
<dbReference type="Gene3D" id="3.40.140.10">
    <property type="entry name" value="Cytidine Deaminase, domain 2"/>
    <property type="match status" value="1"/>
</dbReference>
<dbReference type="InterPro" id="IPR037518">
    <property type="entry name" value="MPN"/>
</dbReference>
<dbReference type="InterPro" id="IPR025657">
    <property type="entry name" value="RadC_JAB"/>
</dbReference>
<dbReference type="InterPro" id="IPR010994">
    <property type="entry name" value="RuvA_2-like"/>
</dbReference>
<dbReference type="InterPro" id="IPR001405">
    <property type="entry name" value="UPF0758"/>
</dbReference>
<dbReference type="InterPro" id="IPR046778">
    <property type="entry name" value="UPF0758_N"/>
</dbReference>
<dbReference type="NCBIfam" id="NF000642">
    <property type="entry name" value="PRK00024.1"/>
    <property type="match status" value="1"/>
</dbReference>
<dbReference type="NCBIfam" id="TIGR00608">
    <property type="entry name" value="radc"/>
    <property type="match status" value="1"/>
</dbReference>
<dbReference type="PANTHER" id="PTHR30471">
    <property type="entry name" value="DNA REPAIR PROTEIN RADC"/>
    <property type="match status" value="1"/>
</dbReference>
<dbReference type="PANTHER" id="PTHR30471:SF3">
    <property type="entry name" value="UPF0758 PROTEIN YEES-RELATED"/>
    <property type="match status" value="1"/>
</dbReference>
<dbReference type="Pfam" id="PF04002">
    <property type="entry name" value="RadC"/>
    <property type="match status" value="1"/>
</dbReference>
<dbReference type="Pfam" id="PF20582">
    <property type="entry name" value="UPF0758_N"/>
    <property type="match status" value="1"/>
</dbReference>
<dbReference type="SUPFAM" id="SSF102712">
    <property type="entry name" value="JAB1/MPN domain"/>
    <property type="match status" value="1"/>
</dbReference>
<dbReference type="SUPFAM" id="SSF47781">
    <property type="entry name" value="RuvA domain 2-like"/>
    <property type="match status" value="1"/>
</dbReference>
<dbReference type="PROSITE" id="PS50249">
    <property type="entry name" value="MPN"/>
    <property type="match status" value="1"/>
</dbReference>
<gene>
    <name type="ordered locus">A1S_2918</name>
</gene>
<sequence>MNTSIKNWPEQERPRERLLQQGPQSLSDSELLAIFLRSGSRQHSAVELARLLIQQFGSLNAVFDASYNELAQFNGIGATKYSQLLAVKELGRRYLDYHFSQTELSLHSSHLVLDYLRYELKGEKQEVFAVLCLDAELRKLHFKKLFFGSVQHCAVSVNQTLRYALQQHACQLVIAHNHPFGSPQPSPEDIKLTQQLEQACQLVEIRLLDHFIISPEGSFSFAEQQLLNPTSIAVQ</sequence>
<keyword id="KW-0378">Hydrolase</keyword>
<keyword id="KW-0479">Metal-binding</keyword>
<keyword id="KW-0482">Metalloprotease</keyword>
<keyword id="KW-0645">Protease</keyword>
<keyword id="KW-0862">Zinc</keyword>
<reference key="1">
    <citation type="journal article" date="2007" name="Genes Dev.">
        <title>New insights into Acinetobacter baumannii pathogenesis revealed by high-density pyrosequencing and transposon mutagenesis.</title>
        <authorList>
            <person name="Smith M.G."/>
            <person name="Gianoulis T.A."/>
            <person name="Pukatzki S."/>
            <person name="Mekalanos J.J."/>
            <person name="Ornston L.N."/>
            <person name="Gerstein M."/>
            <person name="Snyder M."/>
        </authorList>
    </citation>
    <scope>NUCLEOTIDE SEQUENCE [LARGE SCALE GENOMIC DNA]</scope>
    <source>
        <strain>ATCC 17978 / DSM 105126 / CIP 53.77 / LMG 1025 / NCDC KC755 / 5377</strain>
    </source>
</reference>
<protein>
    <recommendedName>
        <fullName>UPF0758 protein A1S_2918</fullName>
    </recommendedName>
</protein>
<organism>
    <name type="scientific">Acinetobacter baumannii (strain ATCC 17978 / DSM 105126 / CIP 53.77 / LMG 1025 / NCDC KC755 / 5377)</name>
    <dbReference type="NCBI Taxonomy" id="400667"/>
    <lineage>
        <taxon>Bacteria</taxon>
        <taxon>Pseudomonadati</taxon>
        <taxon>Pseudomonadota</taxon>
        <taxon>Gammaproteobacteria</taxon>
        <taxon>Moraxellales</taxon>
        <taxon>Moraxellaceae</taxon>
        <taxon>Acinetobacter</taxon>
        <taxon>Acinetobacter calcoaceticus/baumannii complex</taxon>
    </lineage>
</organism>
<name>Y2918_ACIBT</name>
<feature type="chain" id="PRO_0000322660" description="UPF0758 protein A1S_2918">
    <location>
        <begin position="1"/>
        <end position="235"/>
    </location>
</feature>
<feature type="domain" description="MPN" evidence="1">
    <location>
        <begin position="105"/>
        <end position="227"/>
    </location>
</feature>
<feature type="region of interest" description="Disordered" evidence="2">
    <location>
        <begin position="1"/>
        <end position="20"/>
    </location>
</feature>
<feature type="short sequence motif" description="JAMM motif" evidence="1">
    <location>
        <begin position="176"/>
        <end position="189"/>
    </location>
</feature>
<feature type="compositionally biased region" description="Basic and acidic residues" evidence="2">
    <location>
        <begin position="9"/>
        <end position="18"/>
    </location>
</feature>
<feature type="binding site" evidence="1">
    <location>
        <position position="176"/>
    </location>
    <ligand>
        <name>Zn(2+)</name>
        <dbReference type="ChEBI" id="CHEBI:29105"/>
        <note>catalytic</note>
    </ligand>
</feature>
<feature type="binding site" evidence="1">
    <location>
        <position position="178"/>
    </location>
    <ligand>
        <name>Zn(2+)</name>
        <dbReference type="ChEBI" id="CHEBI:29105"/>
        <note>catalytic</note>
    </ligand>
</feature>
<feature type="binding site" evidence="1">
    <location>
        <position position="189"/>
    </location>
    <ligand>
        <name>Zn(2+)</name>
        <dbReference type="ChEBI" id="CHEBI:29105"/>
        <note>catalytic</note>
    </ligand>
</feature>
<comment type="similarity">
    <text evidence="3">Belongs to the UPF0758 family.</text>
</comment>
<accession>A3M8S9</accession>